<evidence type="ECO:0000255" key="1">
    <source>
        <dbReference type="HAMAP-Rule" id="MF_00076"/>
    </source>
</evidence>
<reference key="1">
    <citation type="submission" date="2006-12" db="EMBL/GenBank/DDBJ databases">
        <title>Complete sequence of Halorhodospira halophila SL1.</title>
        <authorList>
            <consortium name="US DOE Joint Genome Institute"/>
            <person name="Copeland A."/>
            <person name="Lucas S."/>
            <person name="Lapidus A."/>
            <person name="Barry K."/>
            <person name="Detter J.C."/>
            <person name="Glavina del Rio T."/>
            <person name="Hammon N."/>
            <person name="Israni S."/>
            <person name="Dalin E."/>
            <person name="Tice H."/>
            <person name="Pitluck S."/>
            <person name="Saunders E."/>
            <person name="Brettin T."/>
            <person name="Bruce D."/>
            <person name="Han C."/>
            <person name="Tapia R."/>
            <person name="Schmutz J."/>
            <person name="Larimer F."/>
            <person name="Land M."/>
            <person name="Hauser L."/>
            <person name="Kyrpides N."/>
            <person name="Mikhailova N."/>
            <person name="Hoff W."/>
            <person name="Richardson P."/>
        </authorList>
    </citation>
    <scope>NUCLEOTIDE SEQUENCE [LARGE SCALE GENOMIC DNA]</scope>
    <source>
        <strain>DSM 244 / SL1</strain>
    </source>
</reference>
<accession>A1WW08</accession>
<name>HIS7_HALHL</name>
<keyword id="KW-0028">Amino-acid biosynthesis</keyword>
<keyword id="KW-0963">Cytoplasm</keyword>
<keyword id="KW-0368">Histidine biosynthesis</keyword>
<keyword id="KW-0456">Lyase</keyword>
<keyword id="KW-1185">Reference proteome</keyword>
<sequence length="197" mass="21449">MAKRTAEVERTTGETAVRVWVDLDGEGAAELDCGVPFFEHMLAQVARHGGVDLRVQAKGDTWIDDHHTVEDVGIALGQALARAWGDKAGLTRYGHAYVPLDEALSRAVLDLSGRPGLVYNAELPRAHVGRFDTELVEEFFRALTSHAAMTAHLDVLRGRNAHHMVECLFKAFGRALRQAVSTDERAGGRVPSTKGAL</sequence>
<gene>
    <name evidence="1" type="primary">hisB</name>
    <name type="ordered locus">Hhal_1094</name>
</gene>
<proteinExistence type="inferred from homology"/>
<comment type="catalytic activity">
    <reaction evidence="1">
        <text>D-erythro-1-(imidazol-4-yl)glycerol 3-phosphate = 3-(imidazol-4-yl)-2-oxopropyl phosphate + H2O</text>
        <dbReference type="Rhea" id="RHEA:11040"/>
        <dbReference type="ChEBI" id="CHEBI:15377"/>
        <dbReference type="ChEBI" id="CHEBI:57766"/>
        <dbReference type="ChEBI" id="CHEBI:58278"/>
        <dbReference type="EC" id="4.2.1.19"/>
    </reaction>
</comment>
<comment type="pathway">
    <text evidence="1">Amino-acid biosynthesis; L-histidine biosynthesis; L-histidine from 5-phospho-alpha-D-ribose 1-diphosphate: step 6/9.</text>
</comment>
<comment type="subcellular location">
    <subcellularLocation>
        <location evidence="1">Cytoplasm</location>
    </subcellularLocation>
</comment>
<comment type="similarity">
    <text evidence="1">Belongs to the imidazoleglycerol-phosphate dehydratase family.</text>
</comment>
<feature type="chain" id="PRO_1000071203" description="Imidazoleglycerol-phosphate dehydratase">
    <location>
        <begin position="1"/>
        <end position="197"/>
    </location>
</feature>
<dbReference type="EC" id="4.2.1.19" evidence="1"/>
<dbReference type="EMBL" id="CP000544">
    <property type="protein sequence ID" value="ABM61870.1"/>
    <property type="molecule type" value="Genomic_DNA"/>
</dbReference>
<dbReference type="RefSeq" id="WP_011813893.1">
    <property type="nucleotide sequence ID" value="NC_008789.1"/>
</dbReference>
<dbReference type="SMR" id="A1WW08"/>
<dbReference type="STRING" id="349124.Hhal_1094"/>
<dbReference type="KEGG" id="hha:Hhal_1094"/>
<dbReference type="eggNOG" id="COG0131">
    <property type="taxonomic scope" value="Bacteria"/>
</dbReference>
<dbReference type="HOGENOM" id="CLU_044308_3_0_6"/>
<dbReference type="OrthoDB" id="9790411at2"/>
<dbReference type="UniPathway" id="UPA00031">
    <property type="reaction ID" value="UER00011"/>
</dbReference>
<dbReference type="Proteomes" id="UP000000647">
    <property type="component" value="Chromosome"/>
</dbReference>
<dbReference type="GO" id="GO:0005737">
    <property type="term" value="C:cytoplasm"/>
    <property type="evidence" value="ECO:0007669"/>
    <property type="project" value="UniProtKB-SubCell"/>
</dbReference>
<dbReference type="GO" id="GO:0004424">
    <property type="term" value="F:imidazoleglycerol-phosphate dehydratase activity"/>
    <property type="evidence" value="ECO:0007669"/>
    <property type="project" value="UniProtKB-UniRule"/>
</dbReference>
<dbReference type="GO" id="GO:0000105">
    <property type="term" value="P:L-histidine biosynthetic process"/>
    <property type="evidence" value="ECO:0007669"/>
    <property type="project" value="UniProtKB-UniRule"/>
</dbReference>
<dbReference type="CDD" id="cd07914">
    <property type="entry name" value="IGPD"/>
    <property type="match status" value="1"/>
</dbReference>
<dbReference type="FunFam" id="3.30.230.40:FF:000001">
    <property type="entry name" value="Imidazoleglycerol-phosphate dehydratase HisB"/>
    <property type="match status" value="1"/>
</dbReference>
<dbReference type="FunFam" id="3.30.230.40:FF:000003">
    <property type="entry name" value="Imidazoleglycerol-phosphate dehydratase HisB"/>
    <property type="match status" value="1"/>
</dbReference>
<dbReference type="Gene3D" id="3.30.230.40">
    <property type="entry name" value="Imidazole glycerol phosphate dehydratase, domain 1"/>
    <property type="match status" value="2"/>
</dbReference>
<dbReference type="HAMAP" id="MF_00076">
    <property type="entry name" value="HisB"/>
    <property type="match status" value="1"/>
</dbReference>
<dbReference type="InterPro" id="IPR038494">
    <property type="entry name" value="IGPD_sf"/>
</dbReference>
<dbReference type="InterPro" id="IPR000807">
    <property type="entry name" value="ImidazoleglycerolP_deHydtase"/>
</dbReference>
<dbReference type="InterPro" id="IPR020565">
    <property type="entry name" value="ImidazoleglycerP_deHydtase_CS"/>
</dbReference>
<dbReference type="InterPro" id="IPR020568">
    <property type="entry name" value="Ribosomal_Su5_D2-typ_SF"/>
</dbReference>
<dbReference type="NCBIfam" id="NF002106">
    <property type="entry name" value="PRK00951.1-1"/>
    <property type="match status" value="1"/>
</dbReference>
<dbReference type="NCBIfam" id="NF002111">
    <property type="entry name" value="PRK00951.2-1"/>
    <property type="match status" value="1"/>
</dbReference>
<dbReference type="NCBIfam" id="NF002114">
    <property type="entry name" value="PRK00951.2-4"/>
    <property type="match status" value="1"/>
</dbReference>
<dbReference type="PANTHER" id="PTHR23133:SF2">
    <property type="entry name" value="IMIDAZOLEGLYCEROL-PHOSPHATE DEHYDRATASE"/>
    <property type="match status" value="1"/>
</dbReference>
<dbReference type="PANTHER" id="PTHR23133">
    <property type="entry name" value="IMIDAZOLEGLYCEROL-PHOSPHATE DEHYDRATASE HIS7"/>
    <property type="match status" value="1"/>
</dbReference>
<dbReference type="Pfam" id="PF00475">
    <property type="entry name" value="IGPD"/>
    <property type="match status" value="1"/>
</dbReference>
<dbReference type="SUPFAM" id="SSF54211">
    <property type="entry name" value="Ribosomal protein S5 domain 2-like"/>
    <property type="match status" value="2"/>
</dbReference>
<dbReference type="PROSITE" id="PS00954">
    <property type="entry name" value="IGP_DEHYDRATASE_1"/>
    <property type="match status" value="1"/>
</dbReference>
<dbReference type="PROSITE" id="PS00955">
    <property type="entry name" value="IGP_DEHYDRATASE_2"/>
    <property type="match status" value="1"/>
</dbReference>
<protein>
    <recommendedName>
        <fullName evidence="1">Imidazoleglycerol-phosphate dehydratase</fullName>
        <shortName evidence="1">IGPD</shortName>
        <ecNumber evidence="1">4.2.1.19</ecNumber>
    </recommendedName>
</protein>
<organism>
    <name type="scientific">Halorhodospira halophila (strain DSM 244 / SL1)</name>
    <name type="common">Ectothiorhodospira halophila (strain DSM 244 / SL1)</name>
    <dbReference type="NCBI Taxonomy" id="349124"/>
    <lineage>
        <taxon>Bacteria</taxon>
        <taxon>Pseudomonadati</taxon>
        <taxon>Pseudomonadota</taxon>
        <taxon>Gammaproteobacteria</taxon>
        <taxon>Chromatiales</taxon>
        <taxon>Ectothiorhodospiraceae</taxon>
        <taxon>Halorhodospira</taxon>
    </lineage>
</organism>